<dbReference type="EC" id="6.3.4.5" evidence="1"/>
<dbReference type="EMBL" id="AE009441">
    <property type="protein sequence ID" value="AAL64511.1"/>
    <property type="status" value="ALT_INIT"/>
    <property type="molecule type" value="Genomic_DNA"/>
</dbReference>
<dbReference type="SMR" id="Q8ZU97"/>
<dbReference type="FunCoup" id="Q8ZU97">
    <property type="interactions" value="206"/>
</dbReference>
<dbReference type="STRING" id="178306.PAE2884"/>
<dbReference type="EnsemblBacteria" id="AAL64511">
    <property type="protein sequence ID" value="AAL64511"/>
    <property type="gene ID" value="PAE2884"/>
</dbReference>
<dbReference type="KEGG" id="pai:PAE2884"/>
<dbReference type="PATRIC" id="fig|178306.9.peg.2156"/>
<dbReference type="eggNOG" id="arCOG00112">
    <property type="taxonomic scope" value="Archaea"/>
</dbReference>
<dbReference type="HOGENOM" id="CLU_032784_1_0_2"/>
<dbReference type="InParanoid" id="Q8ZU97"/>
<dbReference type="UniPathway" id="UPA00068">
    <property type="reaction ID" value="UER00113"/>
</dbReference>
<dbReference type="Proteomes" id="UP000002439">
    <property type="component" value="Chromosome"/>
</dbReference>
<dbReference type="GO" id="GO:0005737">
    <property type="term" value="C:cytoplasm"/>
    <property type="evidence" value="ECO:0000318"/>
    <property type="project" value="GO_Central"/>
</dbReference>
<dbReference type="GO" id="GO:0004055">
    <property type="term" value="F:argininosuccinate synthase activity"/>
    <property type="evidence" value="ECO:0000318"/>
    <property type="project" value="GO_Central"/>
</dbReference>
<dbReference type="GO" id="GO:0005524">
    <property type="term" value="F:ATP binding"/>
    <property type="evidence" value="ECO:0007669"/>
    <property type="project" value="UniProtKB-UniRule"/>
</dbReference>
<dbReference type="GO" id="GO:0000053">
    <property type="term" value="P:argininosuccinate metabolic process"/>
    <property type="evidence" value="ECO:0000318"/>
    <property type="project" value="GO_Central"/>
</dbReference>
<dbReference type="GO" id="GO:0006526">
    <property type="term" value="P:L-arginine biosynthetic process"/>
    <property type="evidence" value="ECO:0000318"/>
    <property type="project" value="GO_Central"/>
</dbReference>
<dbReference type="GO" id="GO:0000050">
    <property type="term" value="P:urea cycle"/>
    <property type="evidence" value="ECO:0000318"/>
    <property type="project" value="GO_Central"/>
</dbReference>
<dbReference type="CDD" id="cd01999">
    <property type="entry name" value="ASS"/>
    <property type="match status" value="1"/>
</dbReference>
<dbReference type="FunFam" id="3.40.50.620:FF:000019">
    <property type="entry name" value="Argininosuccinate synthase"/>
    <property type="match status" value="1"/>
</dbReference>
<dbReference type="FunFam" id="3.90.1260.10:FF:000007">
    <property type="entry name" value="Argininosuccinate synthase"/>
    <property type="match status" value="1"/>
</dbReference>
<dbReference type="Gene3D" id="3.90.1260.10">
    <property type="entry name" value="Argininosuccinate synthetase, chain A, domain 2"/>
    <property type="match status" value="1"/>
</dbReference>
<dbReference type="Gene3D" id="3.40.50.620">
    <property type="entry name" value="HUPs"/>
    <property type="match status" value="1"/>
</dbReference>
<dbReference type="HAMAP" id="MF_00005">
    <property type="entry name" value="Arg_succ_synth_type1"/>
    <property type="match status" value="1"/>
</dbReference>
<dbReference type="InterPro" id="IPR048268">
    <property type="entry name" value="Arginosuc_syn_C"/>
</dbReference>
<dbReference type="InterPro" id="IPR048267">
    <property type="entry name" value="Arginosuc_syn_N"/>
</dbReference>
<dbReference type="InterPro" id="IPR001518">
    <property type="entry name" value="Arginosuc_synth"/>
</dbReference>
<dbReference type="InterPro" id="IPR018223">
    <property type="entry name" value="Arginosuc_synth_CS"/>
</dbReference>
<dbReference type="InterPro" id="IPR023434">
    <property type="entry name" value="Arginosuc_synth_type_1_subfam"/>
</dbReference>
<dbReference type="InterPro" id="IPR024074">
    <property type="entry name" value="AS_cat/multimer_dom_body"/>
</dbReference>
<dbReference type="InterPro" id="IPR014729">
    <property type="entry name" value="Rossmann-like_a/b/a_fold"/>
</dbReference>
<dbReference type="NCBIfam" id="TIGR00032">
    <property type="entry name" value="argG"/>
    <property type="match status" value="1"/>
</dbReference>
<dbReference type="NCBIfam" id="NF001770">
    <property type="entry name" value="PRK00509.1"/>
    <property type="match status" value="1"/>
</dbReference>
<dbReference type="PANTHER" id="PTHR11587">
    <property type="entry name" value="ARGININOSUCCINATE SYNTHASE"/>
    <property type="match status" value="1"/>
</dbReference>
<dbReference type="PANTHER" id="PTHR11587:SF2">
    <property type="entry name" value="ARGININOSUCCINATE SYNTHASE"/>
    <property type="match status" value="1"/>
</dbReference>
<dbReference type="Pfam" id="PF20979">
    <property type="entry name" value="Arginosuc_syn_C"/>
    <property type="match status" value="1"/>
</dbReference>
<dbReference type="Pfam" id="PF00764">
    <property type="entry name" value="Arginosuc_synth"/>
    <property type="match status" value="1"/>
</dbReference>
<dbReference type="SUPFAM" id="SSF52402">
    <property type="entry name" value="Adenine nucleotide alpha hydrolases-like"/>
    <property type="match status" value="1"/>
</dbReference>
<dbReference type="SUPFAM" id="SSF69864">
    <property type="entry name" value="Argininosuccinate synthetase, C-terminal domain"/>
    <property type="match status" value="1"/>
</dbReference>
<dbReference type="PROSITE" id="PS00564">
    <property type="entry name" value="ARGININOSUCCIN_SYN_1"/>
    <property type="match status" value="1"/>
</dbReference>
<dbReference type="PROSITE" id="PS00565">
    <property type="entry name" value="ARGININOSUCCIN_SYN_2"/>
    <property type="match status" value="1"/>
</dbReference>
<name>ASSY_PYRAE</name>
<evidence type="ECO:0000255" key="1">
    <source>
        <dbReference type="HAMAP-Rule" id="MF_00005"/>
    </source>
</evidence>
<evidence type="ECO:0000305" key="2"/>
<organism>
    <name type="scientific">Pyrobaculum aerophilum (strain ATCC 51768 / DSM 7523 / JCM 9630 / CIP 104966 / NBRC 100827 / IM2)</name>
    <dbReference type="NCBI Taxonomy" id="178306"/>
    <lineage>
        <taxon>Archaea</taxon>
        <taxon>Thermoproteota</taxon>
        <taxon>Thermoprotei</taxon>
        <taxon>Thermoproteales</taxon>
        <taxon>Thermoproteaceae</taxon>
        <taxon>Pyrobaculum</taxon>
    </lineage>
</organism>
<gene>
    <name evidence="1" type="primary">argG</name>
    <name type="ordered locus">PAE2884</name>
</gene>
<accession>Q8ZU97</accession>
<comment type="catalytic activity">
    <reaction evidence="1">
        <text>L-citrulline + L-aspartate + ATP = 2-(N(omega)-L-arginino)succinate + AMP + diphosphate + H(+)</text>
        <dbReference type="Rhea" id="RHEA:10932"/>
        <dbReference type="ChEBI" id="CHEBI:15378"/>
        <dbReference type="ChEBI" id="CHEBI:29991"/>
        <dbReference type="ChEBI" id="CHEBI:30616"/>
        <dbReference type="ChEBI" id="CHEBI:33019"/>
        <dbReference type="ChEBI" id="CHEBI:57472"/>
        <dbReference type="ChEBI" id="CHEBI:57743"/>
        <dbReference type="ChEBI" id="CHEBI:456215"/>
        <dbReference type="EC" id="6.3.4.5"/>
    </reaction>
</comment>
<comment type="pathway">
    <text evidence="1">Amino-acid biosynthesis; L-arginine biosynthesis; L-arginine from L-ornithine and carbamoyl phosphate: step 2/3.</text>
</comment>
<comment type="subunit">
    <text evidence="1">Homotetramer.</text>
</comment>
<comment type="subcellular location">
    <subcellularLocation>
        <location evidence="1">Cytoplasm</location>
    </subcellularLocation>
</comment>
<comment type="similarity">
    <text evidence="1">Belongs to the argininosuccinate synthase family. Type 1 subfamily.</text>
</comment>
<comment type="sequence caution" evidence="2">
    <conflict type="erroneous initiation">
        <sequence resource="EMBL-CDS" id="AAL64511"/>
    </conflict>
</comment>
<proteinExistence type="inferred from homology"/>
<sequence>MGASKIVLAYSGGLDTTVAVKWLSEKFGAEVYTVTVDVGQEDDFSKIEERAYKAGAVQHFYIDAKREFAEEYIARAILMNGMYEGVYPLGTALARPLIAAKVVEVARRLGADAVAHGSTSKGNDQVRFDVTVKALAPDLKIIAPARIWGMTRAEEIEYAKRHGLPVGEEHKKYSIDDNLWSRSIEGGPIDDPLAEPPEDAFKWTVSPDKAPHDPTYLTIEFEKGLPVAVNGEKMSLASIISLLNHVGGANGVGRIDHIENRLVGFKSREVYEAPAAVILYHAHRDLEKMVLTPRELRFKHYVLDPQWADLVYQGLWVEPLRNALEKAAEEMERWVSGEVRVKLYKGSLWVVGRESPYGGYSKELADYSAGWYPSDEEARGFIEMWSLHSLTALRRRK</sequence>
<protein>
    <recommendedName>
        <fullName evidence="1">Argininosuccinate synthase</fullName>
        <ecNumber evidence="1">6.3.4.5</ecNumber>
    </recommendedName>
    <alternativeName>
        <fullName evidence="1">Citrulline--aspartate ligase</fullName>
    </alternativeName>
</protein>
<feature type="chain" id="PRO_0000148683" description="Argininosuccinate synthase">
    <location>
        <begin position="1"/>
        <end position="397"/>
    </location>
</feature>
<feature type="binding site" evidence="1">
    <location>
        <begin position="9"/>
        <end position="17"/>
    </location>
    <ligand>
        <name>ATP</name>
        <dbReference type="ChEBI" id="CHEBI:30616"/>
    </ligand>
</feature>
<feature type="binding site" evidence="1">
    <location>
        <position position="87"/>
    </location>
    <ligand>
        <name>L-citrulline</name>
        <dbReference type="ChEBI" id="CHEBI:57743"/>
    </ligand>
</feature>
<feature type="binding site" evidence="1">
    <location>
        <position position="117"/>
    </location>
    <ligand>
        <name>ATP</name>
        <dbReference type="ChEBI" id="CHEBI:30616"/>
    </ligand>
</feature>
<feature type="binding site" evidence="1">
    <location>
        <position position="119"/>
    </location>
    <ligand>
        <name>L-aspartate</name>
        <dbReference type="ChEBI" id="CHEBI:29991"/>
    </ligand>
</feature>
<feature type="binding site" evidence="1">
    <location>
        <position position="123"/>
    </location>
    <ligand>
        <name>L-aspartate</name>
        <dbReference type="ChEBI" id="CHEBI:29991"/>
    </ligand>
</feature>
<feature type="binding site" evidence="1">
    <location>
        <position position="123"/>
    </location>
    <ligand>
        <name>L-citrulline</name>
        <dbReference type="ChEBI" id="CHEBI:57743"/>
    </ligand>
</feature>
<feature type="binding site" evidence="1">
    <location>
        <position position="124"/>
    </location>
    <ligand>
        <name>L-aspartate</name>
        <dbReference type="ChEBI" id="CHEBI:29991"/>
    </ligand>
</feature>
<feature type="binding site" evidence="1">
    <location>
        <position position="127"/>
    </location>
    <ligand>
        <name>L-citrulline</name>
        <dbReference type="ChEBI" id="CHEBI:57743"/>
    </ligand>
</feature>
<feature type="binding site" evidence="1">
    <location>
        <position position="174"/>
    </location>
    <ligand>
        <name>L-citrulline</name>
        <dbReference type="ChEBI" id="CHEBI:57743"/>
    </ligand>
</feature>
<feature type="binding site" evidence="1">
    <location>
        <position position="183"/>
    </location>
    <ligand>
        <name>L-citrulline</name>
        <dbReference type="ChEBI" id="CHEBI:57743"/>
    </ligand>
</feature>
<feature type="binding site" evidence="1">
    <location>
        <position position="259"/>
    </location>
    <ligand>
        <name>L-citrulline</name>
        <dbReference type="ChEBI" id="CHEBI:57743"/>
    </ligand>
</feature>
<feature type="binding site" evidence="1">
    <location>
        <position position="271"/>
    </location>
    <ligand>
        <name>L-citrulline</name>
        <dbReference type="ChEBI" id="CHEBI:57743"/>
    </ligand>
</feature>
<keyword id="KW-0028">Amino-acid biosynthesis</keyword>
<keyword id="KW-0055">Arginine biosynthesis</keyword>
<keyword id="KW-0067">ATP-binding</keyword>
<keyword id="KW-0963">Cytoplasm</keyword>
<keyword id="KW-0436">Ligase</keyword>
<keyword id="KW-0547">Nucleotide-binding</keyword>
<keyword id="KW-1185">Reference proteome</keyword>
<reference key="1">
    <citation type="journal article" date="2002" name="Proc. Natl. Acad. Sci. U.S.A.">
        <title>Genome sequence of the hyperthermophilic crenarchaeon Pyrobaculum aerophilum.</title>
        <authorList>
            <person name="Fitz-Gibbon S.T."/>
            <person name="Ladner H."/>
            <person name="Kim U.-J."/>
            <person name="Stetter K.O."/>
            <person name="Simon M.I."/>
            <person name="Miller J.H."/>
        </authorList>
    </citation>
    <scope>NUCLEOTIDE SEQUENCE [LARGE SCALE GENOMIC DNA]</scope>
    <source>
        <strain>ATCC 51768 / DSM 7523 / JCM 9630 / CIP 104966 / NBRC 100827 / IM2</strain>
    </source>
</reference>